<dbReference type="EC" id="2.7.9.6" evidence="2"/>
<dbReference type="EMBL" id="AE016877">
    <property type="protein sequence ID" value="AAP10031.1"/>
    <property type="molecule type" value="Genomic_DNA"/>
</dbReference>
<dbReference type="RefSeq" id="NP_832830.1">
    <property type="nucleotide sequence ID" value="NC_004722.1"/>
</dbReference>
<dbReference type="RefSeq" id="WP_000094181.1">
    <property type="nucleotide sequence ID" value="NC_004722.1"/>
</dbReference>
<dbReference type="SMR" id="Q81BR3"/>
<dbReference type="KEGG" id="bce:BC3087"/>
<dbReference type="PATRIC" id="fig|226900.8.peg.3164"/>
<dbReference type="HOGENOM" id="CLU_005950_0_0_9"/>
<dbReference type="OrthoDB" id="9765468at2"/>
<dbReference type="Proteomes" id="UP000001417">
    <property type="component" value="Chromosome"/>
</dbReference>
<dbReference type="GO" id="GO:0005524">
    <property type="term" value="F:ATP binding"/>
    <property type="evidence" value="ECO:0007669"/>
    <property type="project" value="UniProtKB-KW"/>
</dbReference>
<dbReference type="GO" id="GO:0008986">
    <property type="term" value="F:pyruvate, water dikinase activity"/>
    <property type="evidence" value="ECO:0007669"/>
    <property type="project" value="UniProtKB-EC"/>
</dbReference>
<dbReference type="GO" id="GO:0046677">
    <property type="term" value="P:response to antibiotic"/>
    <property type="evidence" value="ECO:0007669"/>
    <property type="project" value="UniProtKB-KW"/>
</dbReference>
<dbReference type="FunFam" id="3.30.1490.20:FF:000010">
    <property type="entry name" value="Phosphoenolpyruvate synthase"/>
    <property type="match status" value="1"/>
</dbReference>
<dbReference type="FunFam" id="3.50.30.10:FF:000007">
    <property type="entry name" value="Phosphoenolpyruvate synthase"/>
    <property type="match status" value="1"/>
</dbReference>
<dbReference type="Gene3D" id="3.30.1490.20">
    <property type="entry name" value="ATP-grasp fold, A domain"/>
    <property type="match status" value="1"/>
</dbReference>
<dbReference type="Gene3D" id="3.30.470.20">
    <property type="entry name" value="ATP-grasp fold, B domain"/>
    <property type="match status" value="1"/>
</dbReference>
<dbReference type="Gene3D" id="3.50.30.10">
    <property type="entry name" value="Phosphohistidine domain"/>
    <property type="match status" value="1"/>
</dbReference>
<dbReference type="InterPro" id="IPR013815">
    <property type="entry name" value="ATP_grasp_subdomain_1"/>
</dbReference>
<dbReference type="InterPro" id="IPR008279">
    <property type="entry name" value="PEP-util_enz_mobile_dom"/>
</dbReference>
<dbReference type="InterPro" id="IPR051549">
    <property type="entry name" value="PEP_Utilizing_Enz"/>
</dbReference>
<dbReference type="InterPro" id="IPR036637">
    <property type="entry name" value="Phosphohistidine_dom_sf"/>
</dbReference>
<dbReference type="InterPro" id="IPR002192">
    <property type="entry name" value="PPDK_AMP/ATP-bd"/>
</dbReference>
<dbReference type="NCBIfam" id="NF004877">
    <property type="entry name" value="PRK06241.1-2"/>
    <property type="match status" value="1"/>
</dbReference>
<dbReference type="NCBIfam" id="NF004878">
    <property type="entry name" value="PRK06241.1-3"/>
    <property type="match status" value="1"/>
</dbReference>
<dbReference type="NCBIfam" id="NF004879">
    <property type="entry name" value="PRK06241.1-4"/>
    <property type="match status" value="1"/>
</dbReference>
<dbReference type="NCBIfam" id="NF041857">
    <property type="entry name" value="RIF_Ptrans_rph"/>
    <property type="match status" value="1"/>
</dbReference>
<dbReference type="PANTHER" id="PTHR43615">
    <property type="entry name" value="PHOSPHOENOLPYRUVATE SYNTHASE-RELATED"/>
    <property type="match status" value="1"/>
</dbReference>
<dbReference type="PANTHER" id="PTHR43615:SF1">
    <property type="entry name" value="PPDK_N DOMAIN-CONTAINING PROTEIN"/>
    <property type="match status" value="1"/>
</dbReference>
<dbReference type="Pfam" id="PF00391">
    <property type="entry name" value="PEP-utilizers"/>
    <property type="match status" value="1"/>
</dbReference>
<dbReference type="Pfam" id="PF01326">
    <property type="entry name" value="PPDK_N"/>
    <property type="match status" value="1"/>
</dbReference>
<dbReference type="SUPFAM" id="SSF56059">
    <property type="entry name" value="Glutathione synthetase ATP-binding domain-like"/>
    <property type="match status" value="1"/>
</dbReference>
<dbReference type="SUPFAM" id="SSF52009">
    <property type="entry name" value="Phosphohistidine domain"/>
    <property type="match status" value="1"/>
</dbReference>
<proteinExistence type="evidence at protein level"/>
<organism>
    <name type="scientific">Bacillus cereus (strain ATCC 14579 / DSM 31 / CCUG 7414 / JCM 2152 / NBRC 15305 / NCIMB 9373 / NCTC 2599 / NRRL B-3711)</name>
    <dbReference type="NCBI Taxonomy" id="226900"/>
    <lineage>
        <taxon>Bacteria</taxon>
        <taxon>Bacillati</taxon>
        <taxon>Bacillota</taxon>
        <taxon>Bacilli</taxon>
        <taxon>Bacillales</taxon>
        <taxon>Bacillaceae</taxon>
        <taxon>Bacillus</taxon>
        <taxon>Bacillus cereus group</taxon>
    </lineage>
</organism>
<evidence type="ECO:0000250" key="1">
    <source>
        <dbReference type="UniProtKB" id="A0A0X1KHF9"/>
    </source>
</evidence>
<evidence type="ECO:0000269" key="2">
    <source>
    </source>
</evidence>
<evidence type="ECO:0000303" key="3">
    <source>
    </source>
</evidence>
<evidence type="ECO:0000305" key="4"/>
<evidence type="ECO:0000312" key="5">
    <source>
        <dbReference type="EMBL" id="AAP10031.1"/>
    </source>
</evidence>
<protein>
    <recommendedName>
        <fullName evidence="4">Rifampicin phosphotransferase</fullName>
        <ecNumber evidence="2">2.7.9.6</ecNumber>
    </recommendedName>
    <alternativeName>
        <fullName evidence="4">Rifampin phosphotransferase</fullName>
        <shortName evidence="3">RIF phosphotransferase</shortName>
    </alternativeName>
</protein>
<name>RPH_BACCR</name>
<feature type="chain" id="PRO_0000459646" description="Rifampicin phosphotransferase">
    <location>
        <begin position="1"/>
        <end position="868"/>
    </location>
</feature>
<feature type="region of interest" description="ATP-binding" evidence="1">
    <location>
        <begin position="1"/>
        <end position="313"/>
    </location>
</feature>
<feature type="region of interest" description="Rifampicin-binding" evidence="1">
    <location>
        <begin position="326"/>
        <end position="756"/>
    </location>
</feature>
<feature type="region of interest" description="Swivel phosphohistidine" evidence="1">
    <location>
        <begin position="769"/>
        <end position="867"/>
    </location>
</feature>
<feature type="active site" description="Tele-phosphohistidine intermediate" evidence="1">
    <location>
        <position position="827"/>
    </location>
</feature>
<feature type="binding site" evidence="1">
    <location>
        <position position="22"/>
    </location>
    <ligand>
        <name>ATP</name>
        <dbReference type="ChEBI" id="CHEBI:30616"/>
    </ligand>
</feature>
<feature type="binding site" evidence="1">
    <location>
        <position position="116"/>
    </location>
    <ligand>
        <name>ATP</name>
        <dbReference type="ChEBI" id="CHEBI:30616"/>
    </ligand>
</feature>
<feature type="binding site" evidence="1">
    <location>
        <position position="131"/>
    </location>
    <ligand>
        <name>ATP</name>
        <dbReference type="ChEBI" id="CHEBI:30616"/>
    </ligand>
</feature>
<feature type="binding site" evidence="1">
    <location>
        <position position="135"/>
    </location>
    <ligand>
        <name>ATP</name>
        <dbReference type="ChEBI" id="CHEBI:30616"/>
    </ligand>
</feature>
<feature type="binding site" evidence="1">
    <location>
        <position position="182"/>
    </location>
    <ligand>
        <name>ATP</name>
        <dbReference type="ChEBI" id="CHEBI:30616"/>
    </ligand>
</feature>
<feature type="binding site" evidence="1">
    <location>
        <position position="296"/>
    </location>
    <ligand>
        <name>ATP</name>
        <dbReference type="ChEBI" id="CHEBI:30616"/>
    </ligand>
</feature>
<feature type="binding site" evidence="1">
    <location>
        <position position="308"/>
    </location>
    <ligand>
        <name>ATP</name>
        <dbReference type="ChEBI" id="CHEBI:30616"/>
    </ligand>
</feature>
<feature type="binding site" evidence="1">
    <location>
        <position position="310"/>
    </location>
    <ligand>
        <name>ATP</name>
        <dbReference type="ChEBI" id="CHEBI:30616"/>
    </ligand>
</feature>
<feature type="mutagenesis site" description="Lack of activity in vitro. Fails to confer RIF resistance in E.coli." evidence="2">
    <original>H</original>
    <variation>A</variation>
    <location>
        <position position="827"/>
    </location>
</feature>
<sequence length="868" mass="97658">MSSFVLDFQEIEKTQLFLVGGKGLNLGELSNIQGIQVPEGFCVTTVGYEQAIGKNGAFQTLLNQLAMLKIEERDRIGEISKQIREVIMAVEIPVDVVESVAHYLSHFGDEHAYAVRSSATAEDLPYASFAGQQDTYLNVIGKENILQHIKKCWASLFTDRAVIYRMQNGFDHNQVSICVVIQKMVFPEASGILFTADPITSNRKVLSIDASFGLGEALVSGLVSADNYKVKEDEIVEKVIATKKLAIYGRKEGGTERKKIAPNQQKFQTLTEQQILQLARIGRQIEAYFGCPQDIEWCLVDDTIYIVQSRPITTLYPIPEVNDGENHVYISVGHQQMMTDAMKPLGLSFFLLTTSAPMCKAGGRLFVDATQRLASPASRDYLINTLGKSDPLIRDALTTVIERENFIKLLSDDEKEKDLSKNVPPASSQQQPENDPEIVTNLIKNSELSIEELKRNMQTKSGVDVLDFILEDIQQLKKVLFNSQSIAIIMAGMNASSWINEKMEQWLGEKNAADVLSQSVQHNITSEMGLALLDVADVIRPYPEVIAYLQHVEDDSFLDELIQFKGGEKVRDAIDAFLNKYGMRCSGEIDITKTRWSEQPATIIPMILNHIRDFEYGASKRKFEEGLQEALKKEKELLERLQHLPDGEQKVEETKRMICNLRNFIGYREYPKYGMIHRYFIYKQALLKEAEKLVQNNVLNEIEDIYYLTFEELHEVVRTNKLDYKIIHKQKNAYKLYEKLTPPRVITSDGEIITGKYKRENLPAEAIVGLPVSSGVVEGRARVILNMEDANLEDGDILVTAFTDPGWTPLFVSIKGLVTEVGGLMTHGAVIAREYGLPAVVGVENATKLIKDGQRIRVHGTEGYIEVL</sequence>
<gene>
    <name evidence="3" type="primary">rph</name>
    <name evidence="3" type="synonym">rph-Bc</name>
    <name evidence="5" type="ordered locus">BC_3087</name>
</gene>
<accession>Q81BR3</accession>
<reference key="1">
    <citation type="journal article" date="2003" name="Nature">
        <title>Genome sequence of Bacillus cereus and comparative analysis with Bacillus anthracis.</title>
        <authorList>
            <person name="Ivanova N."/>
            <person name="Sorokin A."/>
            <person name="Anderson I."/>
            <person name="Galleron N."/>
            <person name="Candelon B."/>
            <person name="Kapatral V."/>
            <person name="Bhattacharyya A."/>
            <person name="Reznik G."/>
            <person name="Mikhailova N."/>
            <person name="Lapidus A."/>
            <person name="Chu L."/>
            <person name="Mazur M."/>
            <person name="Goltsman E."/>
            <person name="Larsen N."/>
            <person name="D'Souza M."/>
            <person name="Walunas T."/>
            <person name="Grechkin Y."/>
            <person name="Pusch G."/>
            <person name="Haselkorn R."/>
            <person name="Fonstein M."/>
            <person name="Ehrlich S.D."/>
            <person name="Overbeek R."/>
            <person name="Kyrpides N.C."/>
        </authorList>
    </citation>
    <scope>NUCLEOTIDE SEQUENCE [LARGE SCALE GENOMIC DNA]</scope>
    <source>
        <strain>ATCC 14579 / DSM 31 / CCUG 7414 / JCM 2152 / NBRC 15305 / NCIMB 9373 / NCTC 2599 / NRRL B-3711</strain>
    </source>
</reference>
<reference key="2">
    <citation type="journal article" date="2014" name="Proc. Natl. Acad. Sci. U.S.A.">
        <title>A rifamycin inactivating phosphotransferase family shared by environmental and pathogenic bacteria.</title>
        <authorList>
            <person name="Spanogiannopoulos P."/>
            <person name="Waglechner N."/>
            <person name="Koteva K."/>
            <person name="Wright G.D."/>
        </authorList>
    </citation>
    <scope>FUNCTION</scope>
    <scope>CATALYTIC ACTIVITY</scope>
    <scope>BIOPHYSICOCHEMICAL PROPERTIES</scope>
    <scope>MUTAGENESIS OF HIS-827</scope>
    <source>
        <strain>ATCC 14579 / DSM 31 / CCUG 7414 / JCM 2152 / NBRC 15305 / NCIMB 9373 / NCTC 2599 / NRRL B-3711</strain>
    </source>
</reference>
<keyword id="KW-0046">Antibiotic resistance</keyword>
<keyword id="KW-0067">ATP-binding</keyword>
<keyword id="KW-0418">Kinase</keyword>
<keyword id="KW-0547">Nucleotide-binding</keyword>
<keyword id="KW-1185">Reference proteome</keyword>
<keyword id="KW-0808">Transferase</keyword>
<comment type="function">
    <text evidence="2">Catalyzes the phosphorylation of rifampicin, also known as rifampin (RIF), leading to its inactivation (PubMed:24778229). Confers high level resistance to a variety of clinically used rifamycin antibiotics (PubMed:24778229). Does not show phosphoenolpyruvate (PEP) synthase activity (PubMed:24778229).</text>
</comment>
<comment type="catalytic activity">
    <reaction evidence="2">
        <text>rifampicin + ATP + H2O = 21-phosphorifampicin + AMP + phosphate + 2 H(+)</text>
        <dbReference type="Rhea" id="RHEA:56304"/>
        <dbReference type="ChEBI" id="CHEBI:15377"/>
        <dbReference type="ChEBI" id="CHEBI:15378"/>
        <dbReference type="ChEBI" id="CHEBI:30616"/>
        <dbReference type="ChEBI" id="CHEBI:43474"/>
        <dbReference type="ChEBI" id="CHEBI:71365"/>
        <dbReference type="ChEBI" id="CHEBI:140195"/>
        <dbReference type="ChEBI" id="CHEBI:456215"/>
        <dbReference type="EC" id="2.7.9.6"/>
    </reaction>
    <physiologicalReaction direction="left-to-right" evidence="2">
        <dbReference type="Rhea" id="RHEA:56305"/>
    </physiologicalReaction>
</comment>
<comment type="biophysicochemical properties">
    <kinetics>
        <KM evidence="2">0.13 uM for RIF</KM>
        <KM evidence="2">50.82 uM for ATP</KM>
        <text evidence="2">kcat is 0.80 sec(-1).</text>
    </kinetics>
</comment>
<comment type="domain">
    <text evidence="1">Contains three domains: an N-terminal ATP-binding domain, a large central rifampicin (RIF)-binding domain and a small C-terminal swivel phosphohistidine domain that harbors the conserved histidine residue essential for phosphate transfer.</text>
</comment>
<comment type="similarity">
    <text evidence="4">Belongs to the rifampicin phosphotransferase family.</text>
</comment>